<gene>
    <name type="primary">sua1</name>
    <name type="synonym">asp1</name>
    <name type="synonym">met3</name>
    <name type="ORF">SPBC27.08c</name>
    <name type="ORF">SPBC28F2.01c</name>
</gene>
<organism>
    <name type="scientific">Schizosaccharomyces pombe (strain 972 / ATCC 24843)</name>
    <name type="common">Fission yeast</name>
    <dbReference type="NCBI Taxonomy" id="284812"/>
    <lineage>
        <taxon>Eukaryota</taxon>
        <taxon>Fungi</taxon>
        <taxon>Dikarya</taxon>
        <taxon>Ascomycota</taxon>
        <taxon>Taphrinomycotina</taxon>
        <taxon>Schizosaccharomycetes</taxon>
        <taxon>Schizosaccharomycetales</taxon>
        <taxon>Schizosaccharomycetaceae</taxon>
        <taxon>Schizosaccharomyces</taxon>
    </lineage>
</organism>
<accession>P78937</accession>
<accession>Q9P6S1</accession>
<accession>Q9USV5</accession>
<name>MET3_SCHPO</name>
<feature type="chain" id="PRO_0000105953" description="Sulfate adenylyltransferase">
    <location>
        <begin position="1"/>
        <end position="490"/>
    </location>
</feature>
<feature type="region of interest" description="N-terminal" evidence="1">
    <location>
        <begin position="1"/>
        <end position="165"/>
    </location>
</feature>
<feature type="region of interest" description="Catalytic" evidence="1">
    <location>
        <begin position="166"/>
        <end position="390"/>
    </location>
</feature>
<feature type="region of interest" description="Required for oligomerization; adenylyl-sulfate kinase-like" evidence="1">
    <location>
        <begin position="391"/>
        <end position="490"/>
    </location>
</feature>
<feature type="active site" evidence="1">
    <location>
        <position position="194"/>
    </location>
</feature>
<feature type="active site" evidence="1">
    <location>
        <position position="195"/>
    </location>
</feature>
<feature type="active site" evidence="1">
    <location>
        <position position="196"/>
    </location>
</feature>
<feature type="binding site" evidence="1">
    <location>
        <begin position="193"/>
        <end position="196"/>
    </location>
    <ligand>
        <name>ATP</name>
        <dbReference type="ChEBI" id="CHEBI:30616"/>
    </ligand>
</feature>
<feature type="binding site" evidence="1">
    <location>
        <position position="193"/>
    </location>
    <ligand>
        <name>sulfate</name>
        <dbReference type="ChEBI" id="CHEBI:16189"/>
    </ligand>
</feature>
<feature type="binding site" evidence="1">
    <location>
        <position position="195"/>
    </location>
    <ligand>
        <name>sulfate</name>
        <dbReference type="ChEBI" id="CHEBI:16189"/>
    </ligand>
</feature>
<feature type="binding site" evidence="1">
    <location>
        <begin position="287"/>
        <end position="290"/>
    </location>
    <ligand>
        <name>ATP</name>
        <dbReference type="ChEBI" id="CHEBI:30616"/>
    </ligand>
</feature>
<feature type="binding site" evidence="1">
    <location>
        <position position="291"/>
    </location>
    <ligand>
        <name>sulfate</name>
        <dbReference type="ChEBI" id="CHEBI:16189"/>
    </ligand>
</feature>
<feature type="binding site" evidence="1">
    <location>
        <position position="329"/>
    </location>
    <ligand>
        <name>ATP</name>
        <dbReference type="ChEBI" id="CHEBI:30616"/>
    </ligand>
</feature>
<feature type="site" description="Transition state stabilizer" evidence="1">
    <location>
        <position position="199"/>
    </location>
</feature>
<feature type="site" description="Transition state stabilizer" evidence="1">
    <location>
        <position position="202"/>
    </location>
</feature>
<feature type="site" description="Induces change in substrate recognition on ATP binding" evidence="1">
    <location>
        <position position="326"/>
    </location>
</feature>
<feature type="modified residue" description="Phosphothreonine" evidence="2">
    <location>
        <position position="356"/>
    </location>
</feature>
<feature type="sequence conflict" description="In Ref. 2; BAA12186." evidence="3" ref="2">
    <original>A</original>
    <variation>P</variation>
    <location>
        <position position="88"/>
    </location>
</feature>
<feature type="sequence conflict" description="In Ref. 2; BAA12186." evidence="3" ref="2">
    <original>L</original>
    <variation>I</variation>
    <location>
        <position position="100"/>
    </location>
</feature>
<feature type="sequence conflict" description="In Ref. 2; BAA12186." evidence="3" ref="2">
    <original>A</original>
    <variation>D</variation>
    <location>
        <position position="366"/>
    </location>
</feature>
<comment type="function">
    <text evidence="1">Catalyzes the first intracellular reaction of sulfate assimilation, forming adenosine-5'-phosphosulfate (APS) from inorganic sulfate and ATP. Plays an important role in sulfate activation as a component of the biosynthesis pathway of sulfur-containing amino acids.</text>
</comment>
<comment type="catalytic activity">
    <reaction evidence="1">
        <text>sulfate + ATP + H(+) = adenosine 5'-phosphosulfate + diphosphate</text>
        <dbReference type="Rhea" id="RHEA:18133"/>
        <dbReference type="ChEBI" id="CHEBI:15378"/>
        <dbReference type="ChEBI" id="CHEBI:16189"/>
        <dbReference type="ChEBI" id="CHEBI:30616"/>
        <dbReference type="ChEBI" id="CHEBI:33019"/>
        <dbReference type="ChEBI" id="CHEBI:58243"/>
        <dbReference type="EC" id="2.7.7.4"/>
    </reaction>
</comment>
<comment type="pathway">
    <text evidence="1">Sulfur metabolism; hydrogen sulfide biosynthesis; sulfite from sulfate: step 1/3.</text>
</comment>
<comment type="subunit">
    <text evidence="1">Homohexamer. Dimer of trimers.</text>
</comment>
<comment type="subcellular location">
    <subcellularLocation>
        <location evidence="1">Cytoplasm</location>
    </subcellularLocation>
</comment>
<comment type="domain">
    <text evidence="1">The oligomerization domain is distantly related to APS kinases, but it is not functional and does not bind APS. It is required for oligomerization of the enzyme, although the oligomerization state has no effect on the catalytic activity of the enzyme.</text>
</comment>
<comment type="similarity">
    <text evidence="1">Belongs to the sulfate adenylyltransferase family.</text>
</comment>
<sequence length="490" mass="54754">MTKALLKDLNARDAPLREQLEQEATSLPKIVLSERQFCDVELILNGGFSPLDGFMNQKDYLNVVENLRLSTGEVFPIPITLDLNESQADSLKAGDRVALLDPRDGQTVIAILTVEDKYTPDKANEAEKVFGANDRAHPAVDYLFGRAGNVYVGGKLQAVTPIRHFDFVEYRYSPAQLRSDFQRNNWNRVVAFQTRNPMHRAHRELTVRAAKQHGARVLIHPVVGMTKPGDIDHFTRVRVYEAILQRYPKGSAKLSLLPLAMRMAGPREALWHAIIRKNYGASHFIIGRDHAGPGKNSQGEDFYGPYDAQYLVEQYAQEIGITIVPFQMMTYLPDEDIYKPVDKVEPGTRTLNISGTELRRRLRVGANIPEWFSYPEVVAILRQSYPPKYSQGFVLAVPATSDKLLPSALVSALNEDGRRHVTLLPRLDAISVFYAQELQRAGAAVVVSLADADASVKVPAEWTTVNIKPKDSVSEVTFAVLSQLSDEGYL</sequence>
<reference key="1">
    <citation type="submission" date="2001-09" db="EMBL/GenBank/DDBJ databases">
        <title>Schizosaccharomyces pombe ATP sulfurylase.</title>
        <authorList>
            <person name="Simonics T."/>
            <person name="Maraz A."/>
            <person name="Balla E."/>
        </authorList>
    </citation>
    <scope>NUCLEOTIDE SEQUENCE [GENOMIC DNA]</scope>
    <source>
        <strain>caf1-21</strain>
    </source>
</reference>
<reference key="2">
    <citation type="submission" date="1996-03" db="EMBL/GenBank/DDBJ databases">
        <title>S.pombe chromosome II cosmid 1228 sequence.</title>
        <authorList>
            <person name="Kohnosu A."/>
            <person name="Niwa O."/>
            <person name="Yano M."/>
            <person name="Saitoh S."/>
            <person name="Katayama T."/>
            <person name="Nagao K."/>
            <person name="Yanagida M."/>
        </authorList>
    </citation>
    <scope>NUCLEOTIDE SEQUENCE [GENOMIC DNA]</scope>
    <source>
        <strain>972 / ATCC 24843</strain>
    </source>
</reference>
<reference key="3">
    <citation type="journal article" date="2002" name="Nature">
        <title>The genome sequence of Schizosaccharomyces pombe.</title>
        <authorList>
            <person name="Wood V."/>
            <person name="Gwilliam R."/>
            <person name="Rajandream M.A."/>
            <person name="Lyne M.H."/>
            <person name="Lyne R."/>
            <person name="Stewart A."/>
            <person name="Sgouros J.G."/>
            <person name="Peat N."/>
            <person name="Hayles J."/>
            <person name="Baker S.G."/>
            <person name="Basham D."/>
            <person name="Bowman S."/>
            <person name="Brooks K."/>
            <person name="Brown D."/>
            <person name="Brown S."/>
            <person name="Chillingworth T."/>
            <person name="Churcher C.M."/>
            <person name="Collins M."/>
            <person name="Connor R."/>
            <person name="Cronin A."/>
            <person name="Davis P."/>
            <person name="Feltwell T."/>
            <person name="Fraser A."/>
            <person name="Gentles S."/>
            <person name="Goble A."/>
            <person name="Hamlin N."/>
            <person name="Harris D.E."/>
            <person name="Hidalgo J."/>
            <person name="Hodgson G."/>
            <person name="Holroyd S."/>
            <person name="Hornsby T."/>
            <person name="Howarth S."/>
            <person name="Huckle E.J."/>
            <person name="Hunt S."/>
            <person name="Jagels K."/>
            <person name="James K.D."/>
            <person name="Jones L."/>
            <person name="Jones M."/>
            <person name="Leather S."/>
            <person name="McDonald S."/>
            <person name="McLean J."/>
            <person name="Mooney P."/>
            <person name="Moule S."/>
            <person name="Mungall K.L."/>
            <person name="Murphy L.D."/>
            <person name="Niblett D."/>
            <person name="Odell C."/>
            <person name="Oliver K."/>
            <person name="O'Neil S."/>
            <person name="Pearson D."/>
            <person name="Quail M.A."/>
            <person name="Rabbinowitsch E."/>
            <person name="Rutherford K.M."/>
            <person name="Rutter S."/>
            <person name="Saunders D."/>
            <person name="Seeger K."/>
            <person name="Sharp S."/>
            <person name="Skelton J."/>
            <person name="Simmonds M.N."/>
            <person name="Squares R."/>
            <person name="Squares S."/>
            <person name="Stevens K."/>
            <person name="Taylor K."/>
            <person name="Taylor R.G."/>
            <person name="Tivey A."/>
            <person name="Walsh S.V."/>
            <person name="Warren T."/>
            <person name="Whitehead S."/>
            <person name="Woodward J.R."/>
            <person name="Volckaert G."/>
            <person name="Aert R."/>
            <person name="Robben J."/>
            <person name="Grymonprez B."/>
            <person name="Weltjens I."/>
            <person name="Vanstreels E."/>
            <person name="Rieger M."/>
            <person name="Schaefer M."/>
            <person name="Mueller-Auer S."/>
            <person name="Gabel C."/>
            <person name="Fuchs M."/>
            <person name="Duesterhoeft A."/>
            <person name="Fritzc C."/>
            <person name="Holzer E."/>
            <person name="Moestl D."/>
            <person name="Hilbert H."/>
            <person name="Borzym K."/>
            <person name="Langer I."/>
            <person name="Beck A."/>
            <person name="Lehrach H."/>
            <person name="Reinhardt R."/>
            <person name="Pohl T.M."/>
            <person name="Eger P."/>
            <person name="Zimmermann W."/>
            <person name="Wedler H."/>
            <person name="Wambutt R."/>
            <person name="Purnelle B."/>
            <person name="Goffeau A."/>
            <person name="Cadieu E."/>
            <person name="Dreano S."/>
            <person name="Gloux S."/>
            <person name="Lelaure V."/>
            <person name="Mottier S."/>
            <person name="Galibert F."/>
            <person name="Aves S.J."/>
            <person name="Xiang Z."/>
            <person name="Hunt C."/>
            <person name="Moore K."/>
            <person name="Hurst S.M."/>
            <person name="Lucas M."/>
            <person name="Rochet M."/>
            <person name="Gaillardin C."/>
            <person name="Tallada V.A."/>
            <person name="Garzon A."/>
            <person name="Thode G."/>
            <person name="Daga R.R."/>
            <person name="Cruzado L."/>
            <person name="Jimenez J."/>
            <person name="Sanchez M."/>
            <person name="del Rey F."/>
            <person name="Benito J."/>
            <person name="Dominguez A."/>
            <person name="Revuelta J.L."/>
            <person name="Moreno S."/>
            <person name="Armstrong J."/>
            <person name="Forsburg S.L."/>
            <person name="Cerutti L."/>
            <person name="Lowe T."/>
            <person name="McCombie W.R."/>
            <person name="Paulsen I."/>
            <person name="Potashkin J."/>
            <person name="Shpakovski G.V."/>
            <person name="Ussery D."/>
            <person name="Barrell B.G."/>
            <person name="Nurse P."/>
        </authorList>
    </citation>
    <scope>NUCLEOTIDE SEQUENCE [LARGE SCALE GENOMIC DNA]</scope>
    <source>
        <strain>972 / ATCC 24843</strain>
    </source>
</reference>
<reference key="4">
    <citation type="journal article" date="2008" name="J. Proteome Res.">
        <title>Phosphoproteome analysis of fission yeast.</title>
        <authorList>
            <person name="Wilson-Grady J.T."/>
            <person name="Villen J."/>
            <person name="Gygi S.P."/>
        </authorList>
    </citation>
    <scope>PHOSPHORYLATION [LARGE SCALE ANALYSIS] AT THR-356</scope>
    <scope>IDENTIFICATION BY MASS SPECTROMETRY</scope>
</reference>
<protein>
    <recommendedName>
        <fullName evidence="1">Sulfate adenylyltransferase</fullName>
        <ecNumber evidence="1">2.7.7.4</ecNumber>
    </recommendedName>
    <alternativeName>
        <fullName evidence="1">ATP-sulfurylase</fullName>
    </alternativeName>
    <alternativeName>
        <fullName evidence="1">Sulfate adenylate transferase</fullName>
        <shortName evidence="1">SAT</shortName>
    </alternativeName>
</protein>
<proteinExistence type="evidence at protein level"/>
<keyword id="KW-0028">Amino-acid biosynthesis</keyword>
<keyword id="KW-0067">ATP-binding</keyword>
<keyword id="KW-0198">Cysteine biosynthesis</keyword>
<keyword id="KW-0963">Cytoplasm</keyword>
<keyword id="KW-0486">Methionine biosynthesis</keyword>
<keyword id="KW-0547">Nucleotide-binding</keyword>
<keyword id="KW-0548">Nucleotidyltransferase</keyword>
<keyword id="KW-0597">Phosphoprotein</keyword>
<keyword id="KW-1185">Reference proteome</keyword>
<keyword id="KW-0808">Transferase</keyword>
<dbReference type="EC" id="2.7.7.4" evidence="1"/>
<dbReference type="EMBL" id="AF421374">
    <property type="protein sequence ID" value="AAN32720.1"/>
    <property type="molecule type" value="Genomic_DNA"/>
</dbReference>
<dbReference type="EMBL" id="D83992">
    <property type="protein sequence ID" value="BAA12186.1"/>
    <property type="molecule type" value="Genomic_DNA"/>
</dbReference>
<dbReference type="EMBL" id="CU329671">
    <property type="protein sequence ID" value="CAB89007.2"/>
    <property type="molecule type" value="Genomic_DNA"/>
</dbReference>
<dbReference type="PIR" id="T40044">
    <property type="entry name" value="T40044"/>
</dbReference>
<dbReference type="RefSeq" id="NP_595662.2">
    <property type="nucleotide sequence ID" value="NM_001021556.3"/>
</dbReference>
<dbReference type="SMR" id="P78937"/>
<dbReference type="BioGRID" id="276950">
    <property type="interactions" value="15"/>
</dbReference>
<dbReference type="FunCoup" id="P78937">
    <property type="interactions" value="269"/>
</dbReference>
<dbReference type="STRING" id="284812.P78937"/>
<dbReference type="iPTMnet" id="P78937"/>
<dbReference type="PaxDb" id="4896-SPBC27.08c.1"/>
<dbReference type="EnsemblFungi" id="SPBC27.08c.1">
    <property type="protein sequence ID" value="SPBC27.08c.1:pep"/>
    <property type="gene ID" value="SPBC27.08c"/>
</dbReference>
<dbReference type="GeneID" id="2540422"/>
<dbReference type="KEGG" id="spo:2540422"/>
<dbReference type="PomBase" id="SPBC27.08c">
    <property type="gene designation" value="sua1"/>
</dbReference>
<dbReference type="VEuPathDB" id="FungiDB:SPBC27.08c"/>
<dbReference type="eggNOG" id="KOG0636">
    <property type="taxonomic scope" value="Eukaryota"/>
</dbReference>
<dbReference type="HOGENOM" id="CLU_022950_1_0_1"/>
<dbReference type="InParanoid" id="P78937"/>
<dbReference type="OMA" id="EWFSFPE"/>
<dbReference type="PhylomeDB" id="P78937"/>
<dbReference type="UniPathway" id="UPA00140">
    <property type="reaction ID" value="UER00204"/>
</dbReference>
<dbReference type="PRO" id="PR:P78937"/>
<dbReference type="Proteomes" id="UP000002485">
    <property type="component" value="Chromosome II"/>
</dbReference>
<dbReference type="GO" id="GO:0005829">
    <property type="term" value="C:cytosol"/>
    <property type="evidence" value="ECO:0007005"/>
    <property type="project" value="PomBase"/>
</dbReference>
<dbReference type="GO" id="GO:0005739">
    <property type="term" value="C:mitochondrion"/>
    <property type="evidence" value="ECO:0000250"/>
    <property type="project" value="PomBase"/>
</dbReference>
<dbReference type="GO" id="GO:0005524">
    <property type="term" value="F:ATP binding"/>
    <property type="evidence" value="ECO:0007669"/>
    <property type="project" value="UniProtKB-KW"/>
</dbReference>
<dbReference type="GO" id="GO:0004781">
    <property type="term" value="F:sulfate adenylyltransferase (ATP) activity"/>
    <property type="evidence" value="ECO:0000315"/>
    <property type="project" value="PomBase"/>
</dbReference>
<dbReference type="GO" id="GO:0019344">
    <property type="term" value="P:cysteine biosynthetic process"/>
    <property type="evidence" value="ECO:0007669"/>
    <property type="project" value="UniProtKB-KW"/>
</dbReference>
<dbReference type="GO" id="GO:0070814">
    <property type="term" value="P:hydrogen sulfide biosynthetic process"/>
    <property type="evidence" value="ECO:0007669"/>
    <property type="project" value="UniProtKB-UniRule"/>
</dbReference>
<dbReference type="GO" id="GO:0009086">
    <property type="term" value="P:methionine biosynthetic process"/>
    <property type="evidence" value="ECO:0007669"/>
    <property type="project" value="UniProtKB-KW"/>
</dbReference>
<dbReference type="GO" id="GO:0000103">
    <property type="term" value="P:sulfate assimilation"/>
    <property type="evidence" value="ECO:0000315"/>
    <property type="project" value="PomBase"/>
</dbReference>
<dbReference type="CDD" id="cd00517">
    <property type="entry name" value="ATPS"/>
    <property type="match status" value="1"/>
</dbReference>
<dbReference type="FunFam" id="3.40.50.620:FF:000052">
    <property type="entry name" value="Sulfate adenylyltransferase"/>
    <property type="match status" value="1"/>
</dbReference>
<dbReference type="Gene3D" id="3.40.50.620">
    <property type="entry name" value="HUPs"/>
    <property type="match status" value="1"/>
</dbReference>
<dbReference type="Gene3D" id="3.40.50.300">
    <property type="entry name" value="P-loop containing nucleotide triphosphate hydrolases"/>
    <property type="match status" value="1"/>
</dbReference>
<dbReference type="Gene3D" id="3.10.400.10">
    <property type="entry name" value="Sulfate adenylyltransferase"/>
    <property type="match status" value="1"/>
</dbReference>
<dbReference type="HAMAP" id="MF_03106">
    <property type="entry name" value="Sulf_adenylyltr_euk"/>
    <property type="match status" value="1"/>
</dbReference>
<dbReference type="InterPro" id="IPR025980">
    <property type="entry name" value="ATP-Sase_PUA-like_dom"/>
</dbReference>
<dbReference type="InterPro" id="IPR027417">
    <property type="entry name" value="P-loop_NTPase"/>
</dbReference>
<dbReference type="InterPro" id="IPR015947">
    <property type="entry name" value="PUA-like_sf"/>
</dbReference>
<dbReference type="InterPro" id="IPR014729">
    <property type="entry name" value="Rossmann-like_a/b/a_fold"/>
</dbReference>
<dbReference type="InterPro" id="IPR027535">
    <property type="entry name" value="Sulf_adenylyltr_euk"/>
</dbReference>
<dbReference type="InterPro" id="IPR050512">
    <property type="entry name" value="Sulf_AdTrans/APS_kinase"/>
</dbReference>
<dbReference type="InterPro" id="IPR024951">
    <property type="entry name" value="Sulfurylase_cat_dom"/>
</dbReference>
<dbReference type="InterPro" id="IPR002650">
    <property type="entry name" value="Sulphate_adenylyltransferase"/>
</dbReference>
<dbReference type="NCBIfam" id="TIGR00339">
    <property type="entry name" value="sopT"/>
    <property type="match status" value="1"/>
</dbReference>
<dbReference type="PANTHER" id="PTHR42700">
    <property type="entry name" value="SULFATE ADENYLYLTRANSFERASE"/>
    <property type="match status" value="1"/>
</dbReference>
<dbReference type="PANTHER" id="PTHR42700:SF1">
    <property type="entry name" value="SULFATE ADENYLYLTRANSFERASE"/>
    <property type="match status" value="1"/>
</dbReference>
<dbReference type="Pfam" id="PF01747">
    <property type="entry name" value="ATP-sulfurylase"/>
    <property type="match status" value="1"/>
</dbReference>
<dbReference type="Pfam" id="PF14306">
    <property type="entry name" value="PUA_2"/>
    <property type="match status" value="1"/>
</dbReference>
<dbReference type="SUPFAM" id="SSF52374">
    <property type="entry name" value="Nucleotidylyl transferase"/>
    <property type="match status" value="1"/>
</dbReference>
<dbReference type="SUPFAM" id="SSF88697">
    <property type="entry name" value="PUA domain-like"/>
    <property type="match status" value="1"/>
</dbReference>
<evidence type="ECO:0000255" key="1">
    <source>
        <dbReference type="HAMAP-Rule" id="MF_03106"/>
    </source>
</evidence>
<evidence type="ECO:0000269" key="2">
    <source>
    </source>
</evidence>
<evidence type="ECO:0000305" key="3"/>